<gene>
    <name evidence="1" type="primary">dltC</name>
    <name type="ordered locus">lhv_2058</name>
</gene>
<proteinExistence type="inferred from homology"/>
<keyword id="KW-0961">Cell wall biogenesis/degradation</keyword>
<keyword id="KW-0963">Cytoplasm</keyword>
<keyword id="KW-0596">Phosphopantetheine</keyword>
<keyword id="KW-0597">Phosphoprotein</keyword>
<evidence type="ECO:0000255" key="1">
    <source>
        <dbReference type="HAMAP-Rule" id="MF_00565"/>
    </source>
</evidence>
<protein>
    <recommendedName>
        <fullName evidence="1">D-alanyl carrier protein</fullName>
        <shortName evidence="1">DCP</shortName>
    </recommendedName>
    <alternativeName>
        <fullName evidence="1">D-alanine--poly(phosphoribitol) ligase subunit 2</fullName>
    </alternativeName>
</protein>
<name>DLTC_LACH4</name>
<reference key="1">
    <citation type="journal article" date="2008" name="J. Bacteriol.">
        <title>Genome sequence of Lactobacillus helveticus: an organism distinguished by selective gene loss and IS element expansion.</title>
        <authorList>
            <person name="Callanan M."/>
            <person name="Kaleta P."/>
            <person name="O'Callaghan J."/>
            <person name="O'Sullivan O."/>
            <person name="Jordan K."/>
            <person name="McAuliffe O."/>
            <person name="Sangrador-Vegas A."/>
            <person name="Slattery L."/>
            <person name="Fitzgerald G.F."/>
            <person name="Beresford T."/>
            <person name="Ross R.P."/>
        </authorList>
    </citation>
    <scope>NUCLEOTIDE SEQUENCE [LARGE SCALE GENOMIC DNA]</scope>
    <source>
        <strain>DPC 4571</strain>
    </source>
</reference>
<feature type="chain" id="PRO_1000072568" description="D-alanyl carrier protein">
    <location>
        <begin position="1"/>
        <end position="79"/>
    </location>
</feature>
<feature type="domain" description="Carrier" evidence="1">
    <location>
        <begin position="1"/>
        <end position="77"/>
    </location>
</feature>
<feature type="modified residue" description="O-(pantetheine 4'-phosphoryl)serine" evidence="1">
    <location>
        <position position="35"/>
    </location>
</feature>
<accession>A8YTM4</accession>
<comment type="function">
    <text evidence="1">Carrier protein involved in the D-alanylation of lipoteichoic acid (LTA). The loading of thioester-linked D-alanine onto DltC is catalyzed by D-alanine--D-alanyl carrier protein ligase DltA. The DltC-carried D-alanyl group is further transferred to cell membrane phosphatidylglycerol (PG) by forming an ester bond, probably catalyzed by DltD. D-alanylation of LTA plays an important role in modulating the properties of the cell wall in Gram-positive bacteria, influencing the net charge of the cell wall.</text>
</comment>
<comment type="pathway">
    <text evidence="1">Cell wall biogenesis; lipoteichoic acid biosynthesis.</text>
</comment>
<comment type="subcellular location">
    <subcellularLocation>
        <location evidence="1">Cytoplasm</location>
    </subcellularLocation>
</comment>
<comment type="PTM">
    <text evidence="1">4'-phosphopantetheine is transferred from CoA to a specific serine of apo-DCP.</text>
</comment>
<comment type="similarity">
    <text evidence="1">Belongs to the DltC family.</text>
</comment>
<dbReference type="EMBL" id="CP000517">
    <property type="protein sequence ID" value="ABX27848.1"/>
    <property type="molecule type" value="Genomic_DNA"/>
</dbReference>
<dbReference type="RefSeq" id="WP_003625019.1">
    <property type="nucleotide sequence ID" value="NC_010080.1"/>
</dbReference>
<dbReference type="SMR" id="A8YTM4"/>
<dbReference type="GeneID" id="78203536"/>
<dbReference type="KEGG" id="lhe:lhv_2058"/>
<dbReference type="eggNOG" id="COG0236">
    <property type="taxonomic scope" value="Bacteria"/>
</dbReference>
<dbReference type="HOGENOM" id="CLU_108696_19_0_9"/>
<dbReference type="UniPathway" id="UPA00556"/>
<dbReference type="Proteomes" id="UP000000790">
    <property type="component" value="Chromosome"/>
</dbReference>
<dbReference type="GO" id="GO:0005737">
    <property type="term" value="C:cytoplasm"/>
    <property type="evidence" value="ECO:0007669"/>
    <property type="project" value="UniProtKB-SubCell"/>
</dbReference>
<dbReference type="GO" id="GO:0036370">
    <property type="term" value="F:D-alanyl carrier activity"/>
    <property type="evidence" value="ECO:0007669"/>
    <property type="project" value="UniProtKB-UniRule"/>
</dbReference>
<dbReference type="GO" id="GO:0071555">
    <property type="term" value="P:cell wall organization"/>
    <property type="evidence" value="ECO:0007669"/>
    <property type="project" value="UniProtKB-KW"/>
</dbReference>
<dbReference type="GO" id="GO:0070395">
    <property type="term" value="P:lipoteichoic acid biosynthetic process"/>
    <property type="evidence" value="ECO:0007669"/>
    <property type="project" value="UniProtKB-UniRule"/>
</dbReference>
<dbReference type="Gene3D" id="1.10.1200.10">
    <property type="entry name" value="ACP-like"/>
    <property type="match status" value="1"/>
</dbReference>
<dbReference type="HAMAP" id="MF_00565">
    <property type="entry name" value="DltC"/>
    <property type="match status" value="1"/>
</dbReference>
<dbReference type="InterPro" id="IPR036736">
    <property type="entry name" value="ACP-like_sf"/>
</dbReference>
<dbReference type="InterPro" id="IPR003230">
    <property type="entry name" value="DltC"/>
</dbReference>
<dbReference type="InterPro" id="IPR009081">
    <property type="entry name" value="PP-bd_ACP"/>
</dbReference>
<dbReference type="NCBIfam" id="TIGR01688">
    <property type="entry name" value="dltC"/>
    <property type="match status" value="1"/>
</dbReference>
<dbReference type="NCBIfam" id="NF003464">
    <property type="entry name" value="PRK05087.1"/>
    <property type="match status" value="1"/>
</dbReference>
<dbReference type="Pfam" id="PF00550">
    <property type="entry name" value="PP-binding"/>
    <property type="match status" value="1"/>
</dbReference>
<dbReference type="SUPFAM" id="SSF47336">
    <property type="entry name" value="ACP-like"/>
    <property type="match status" value="1"/>
</dbReference>
<dbReference type="PROSITE" id="PS50075">
    <property type="entry name" value="CARRIER"/>
    <property type="match status" value="1"/>
</dbReference>
<sequence length="79" mass="8937">MDTKQGVLDILNDLTGEDLSDQMDENIFDNGLMDSMASVQMLLSLQEKFDIDVPVSEFNRAEWDTPNKIVAKVESLENE</sequence>
<organism>
    <name type="scientific">Lactobacillus helveticus (strain DPC 4571)</name>
    <dbReference type="NCBI Taxonomy" id="405566"/>
    <lineage>
        <taxon>Bacteria</taxon>
        <taxon>Bacillati</taxon>
        <taxon>Bacillota</taxon>
        <taxon>Bacilli</taxon>
        <taxon>Lactobacillales</taxon>
        <taxon>Lactobacillaceae</taxon>
        <taxon>Lactobacillus</taxon>
    </lineage>
</organism>